<name>CRBA1_BOVIN</name>
<feature type="chain" id="PRO_0000006329" description="Beta-crystallin A3">
    <location>
        <begin position="1"/>
        <end position="215"/>
    </location>
</feature>
<feature type="chain" id="PRO_0000226689" description="Beta-crystallin A3, isoform A1, Delta4 form">
    <location>
        <begin position="23"/>
        <end position="215"/>
    </location>
</feature>
<feature type="chain" id="PRO_0000226690" description="Beta-crystallin A3, isoform A1, Delta7 form">
    <location>
        <begin position="26"/>
        <end position="215"/>
    </location>
</feature>
<feature type="chain" id="PRO_0000226691" description="Beta-crystallin A3, isoform A1, Delta8 form">
    <location>
        <begin position="27"/>
        <end position="215"/>
    </location>
</feature>
<feature type="domain" description="Beta/gamma crystallin 'Greek key' 1" evidence="3">
    <location>
        <begin position="31"/>
        <end position="70"/>
    </location>
</feature>
<feature type="domain" description="Beta/gamma crystallin 'Greek key' 2" evidence="3">
    <location>
        <begin position="71"/>
        <end position="117"/>
    </location>
</feature>
<feature type="domain" description="Beta/gamma crystallin 'Greek key' 3" evidence="3">
    <location>
        <begin position="124"/>
        <end position="165"/>
    </location>
</feature>
<feature type="domain" description="Beta/gamma crystallin 'Greek key' 4" evidence="3">
    <location>
        <begin position="166"/>
        <end position="214"/>
    </location>
</feature>
<feature type="region of interest" description="N-terminal arm">
    <location>
        <begin position="1"/>
        <end position="30"/>
    </location>
</feature>
<feature type="region of interest" description="Disordered" evidence="4">
    <location>
        <begin position="1"/>
        <end position="24"/>
    </location>
</feature>
<feature type="region of interest" description="Connecting peptide">
    <location>
        <begin position="118"/>
        <end position="123"/>
    </location>
</feature>
<feature type="modified residue" description="N-acetylmethionine" evidence="2">
    <location>
        <position position="1"/>
    </location>
</feature>
<feature type="modified residue" description="S-glutathionyl cysteine; alternate" evidence="1">
    <location>
        <position position="82"/>
    </location>
</feature>
<feature type="modified residue" description="S-methylcysteine; alternate" evidence="1">
    <location>
        <position position="82"/>
    </location>
</feature>
<feature type="modified residue" description="S-glutathionyl cysteine; alternate" evidence="1">
    <location>
        <position position="117"/>
    </location>
</feature>
<feature type="modified residue" description="S-methylcysteine; alternate" evidence="1">
    <location>
        <position position="117"/>
    </location>
</feature>
<feature type="splice variant" id="VSP_018709" description="In isoform A1." evidence="5">
    <location>
        <begin position="1"/>
        <end position="17"/>
    </location>
</feature>
<feature type="sequence conflict" description="In Ref. 1; AAA30401." evidence="5" ref="1">
    <original>E</original>
    <variation>K</variation>
    <location>
        <position position="11"/>
    </location>
</feature>
<feature type="initiator methionine" description="Removed" evidence="5">
    <location sequence="P11843-2">
        <position position="1"/>
    </location>
</feature>
<feature type="modified residue" description="N-acetylalanine" evidence="1">
    <location sequence="P11843-2">
        <position position="2"/>
    </location>
</feature>
<comment type="function">
    <text>Crystallins are the dominant structural components of the vertebrate eye lens.</text>
</comment>
<comment type="subunit">
    <text evidence="1 2">Homo/heterodimer, or complexes of higher-order. The structure of beta-crystallin oligomers seems to be stabilized through interactions between the N-terminal arms (By similarity). Interacts with CRYBA1 (By similarity).</text>
</comment>
<comment type="alternative products">
    <event type="alternative initiation"/>
    <isoform>
        <id>P11843-1</id>
        <name>A3</name>
        <sequence type="displayed"/>
    </isoform>
    <isoform>
        <id>P11843-2</id>
        <name>A1</name>
        <sequence type="described" ref="VSP_018709"/>
    </isoform>
</comment>
<comment type="domain">
    <text>Has a two-domain beta-structure, folded into four very similar Greek key motifs.</text>
</comment>
<comment type="PTM">
    <text evidence="1">Specific cleavages in the N-terminal arm occur during lens maturation and give rise to several truncated forms.</text>
</comment>
<comment type="PTM">
    <text evidence="1">Isoform A1 contains a N-acetylalanine at position 2.</text>
</comment>
<comment type="similarity">
    <text evidence="5">Belongs to the beta/gamma-crystallin family.</text>
</comment>
<sequence length="215" mass="25131">METQTVQQELESLPTTKMAQTNPMPGSVGPWKITIYDQENFQGKRMEFTSSCPNVSERNFDNVRSLKVECGAWVGYEHTSFCGQQFVLERGEYPRWDAWSGSNAYHIERLMSFRPICSANHKESKITIFEKENFIGRQWEICDDYPSLQAMGWPNNEVGSMKIQCGAWVCYQYPGYRGYQYILECDHHGGDYKHWREWGSHAQTSQIQSIRRIQQ</sequence>
<organism>
    <name type="scientific">Bos taurus</name>
    <name type="common">Bovine</name>
    <dbReference type="NCBI Taxonomy" id="9913"/>
    <lineage>
        <taxon>Eukaryota</taxon>
        <taxon>Metazoa</taxon>
        <taxon>Chordata</taxon>
        <taxon>Craniata</taxon>
        <taxon>Vertebrata</taxon>
        <taxon>Euteleostomi</taxon>
        <taxon>Mammalia</taxon>
        <taxon>Eutheria</taxon>
        <taxon>Laurasiatheria</taxon>
        <taxon>Artiodactyla</taxon>
        <taxon>Ruminantia</taxon>
        <taxon>Pecora</taxon>
        <taxon>Bovidae</taxon>
        <taxon>Bovinae</taxon>
        <taxon>Bos</taxon>
    </lineage>
</organism>
<dbReference type="EMBL" id="M33010">
    <property type="protein sequence ID" value="AAA30401.1"/>
    <property type="molecule type" value="mRNA"/>
</dbReference>
<dbReference type="EMBL" id="AY645778">
    <property type="protein sequence ID" value="AAT72793.1"/>
    <property type="molecule type" value="mRNA"/>
</dbReference>
<dbReference type="EMBL" id="M11850">
    <property type="protein sequence ID" value="AAA30473.1"/>
    <property type="molecule type" value="mRNA"/>
</dbReference>
<dbReference type="EMBL" id="M11850">
    <property type="protein sequence ID" value="AAA30474.1"/>
    <property type="molecule type" value="mRNA"/>
</dbReference>
<dbReference type="PIR" id="C27898">
    <property type="entry name" value="C27898"/>
</dbReference>
<dbReference type="PIR" id="I45857">
    <property type="entry name" value="I45857"/>
</dbReference>
<dbReference type="RefSeq" id="NP_776948.1">
    <property type="nucleotide sequence ID" value="NM_174523.3"/>
</dbReference>
<dbReference type="SMR" id="P11843"/>
<dbReference type="FunCoup" id="P11843">
    <property type="interactions" value="113"/>
</dbReference>
<dbReference type="STRING" id="9913.ENSBTAP00000007037"/>
<dbReference type="PaxDb" id="9913-ENSBTAP00000007037"/>
<dbReference type="GeneID" id="282202"/>
<dbReference type="KEGG" id="bta:282202"/>
<dbReference type="CTD" id="1411"/>
<dbReference type="eggNOG" id="ENOG502QSM0">
    <property type="taxonomic scope" value="Eukaryota"/>
</dbReference>
<dbReference type="InParanoid" id="P11843"/>
<dbReference type="OrthoDB" id="8688215at2759"/>
<dbReference type="Proteomes" id="UP000009136">
    <property type="component" value="Unplaced"/>
</dbReference>
<dbReference type="GO" id="GO:0005212">
    <property type="term" value="F:structural constituent of eye lens"/>
    <property type="evidence" value="ECO:0000318"/>
    <property type="project" value="GO_Central"/>
</dbReference>
<dbReference type="GO" id="GO:0002088">
    <property type="term" value="P:lens development in camera-type eye"/>
    <property type="evidence" value="ECO:0000318"/>
    <property type="project" value="GO_Central"/>
</dbReference>
<dbReference type="GO" id="GO:0007601">
    <property type="term" value="P:visual perception"/>
    <property type="evidence" value="ECO:0000318"/>
    <property type="project" value="GO_Central"/>
</dbReference>
<dbReference type="FunFam" id="2.60.20.10:FF:000004">
    <property type="entry name" value="Crystallin beta A4"/>
    <property type="match status" value="1"/>
</dbReference>
<dbReference type="FunFam" id="2.60.20.10:FF:000002">
    <property type="entry name" value="Crystallin, beta B2"/>
    <property type="match status" value="1"/>
</dbReference>
<dbReference type="Gene3D" id="2.60.20.10">
    <property type="entry name" value="Crystallins"/>
    <property type="match status" value="2"/>
</dbReference>
<dbReference type="InterPro" id="IPR050252">
    <property type="entry name" value="Beta/Gamma-Crystallin"/>
</dbReference>
<dbReference type="InterPro" id="IPR001064">
    <property type="entry name" value="Beta/gamma_crystallin"/>
</dbReference>
<dbReference type="InterPro" id="IPR011024">
    <property type="entry name" value="G_crystallin-like"/>
</dbReference>
<dbReference type="PANTHER" id="PTHR11818:SF8">
    <property type="entry name" value="BETA-CRYSTALLIN A3"/>
    <property type="match status" value="1"/>
</dbReference>
<dbReference type="PANTHER" id="PTHR11818">
    <property type="entry name" value="BETA/GAMMA CRYSTALLIN"/>
    <property type="match status" value="1"/>
</dbReference>
<dbReference type="Pfam" id="PF00030">
    <property type="entry name" value="Crystall"/>
    <property type="match status" value="2"/>
</dbReference>
<dbReference type="PRINTS" id="PR01367">
    <property type="entry name" value="BGCRYSTALLIN"/>
</dbReference>
<dbReference type="SMART" id="SM00247">
    <property type="entry name" value="XTALbg"/>
    <property type="match status" value="2"/>
</dbReference>
<dbReference type="SUPFAM" id="SSF49695">
    <property type="entry name" value="gamma-Crystallin-like"/>
    <property type="match status" value="1"/>
</dbReference>
<dbReference type="PROSITE" id="PS50915">
    <property type="entry name" value="CRYSTALLIN_BETA_GAMMA"/>
    <property type="match status" value="4"/>
</dbReference>
<keyword id="KW-0007">Acetylation</keyword>
<keyword id="KW-0024">Alternative initiation</keyword>
<keyword id="KW-0903">Direct protein sequencing</keyword>
<keyword id="KW-0273">Eye lens protein</keyword>
<keyword id="KW-0318">Glutathionylation</keyword>
<keyword id="KW-0488">Methylation</keyword>
<keyword id="KW-1185">Reference proteome</keyword>
<keyword id="KW-0677">Repeat</keyword>
<gene>
    <name evidence="2" type="primary">CRYBA1</name>
</gene>
<evidence type="ECO:0000250" key="1"/>
<evidence type="ECO:0000250" key="2">
    <source>
        <dbReference type="UniProtKB" id="P05813"/>
    </source>
</evidence>
<evidence type="ECO:0000255" key="3">
    <source>
        <dbReference type="PROSITE-ProRule" id="PRU00028"/>
    </source>
</evidence>
<evidence type="ECO:0000256" key="4">
    <source>
        <dbReference type="SAM" id="MobiDB-lite"/>
    </source>
</evidence>
<evidence type="ECO:0000305" key="5"/>
<proteinExistence type="evidence at protein level"/>
<accession>P11843</accession>
<accession>P79425</accession>
<accession>Q6DTZ7</accession>
<accession>Q95113</accession>
<reference key="1">
    <citation type="journal article" date="1984" name="Curr. Eye Res.">
        <title>Cloning and characterization of a cow beta crystallin cDNA.</title>
        <authorList>
            <person name="Gorin M.B."/>
            <person name="Horwitz J."/>
        </authorList>
    </citation>
    <scope>NUCLEOTIDE SEQUENCE [MRNA]</scope>
</reference>
<reference key="2">
    <citation type="submission" date="2004-06" db="EMBL/GenBank/DDBJ databases">
        <title>Lens proteomics: identification of the major proteins in the bovine lens and sequence analysis of beta A3, beta B3, and beta A4-crystallins.</title>
        <authorList>
            <person name="David L.L."/>
            <person name="Lampi K.J."/>
            <person name="Shih M."/>
            <person name="Shearer T.R."/>
            <person name="Sheil M.M."/>
            <person name="Stutchbury G."/>
            <person name="Truscott R.J.W."/>
        </authorList>
    </citation>
    <scope>NUCLEOTIDE SEQUENCE [MRNA]</scope>
    <source>
        <tissue>Lens</tissue>
    </source>
</reference>
<reference key="3">
    <citation type="journal article" date="1984" name="Eur. J. Biochem.">
        <title>Homology between the primary structures of the major bovine beta-crystallin chains.</title>
        <authorList>
            <person name="Berbers G.A.M."/>
            <person name="Hoekman W.A."/>
            <person name="Bloemendal H."/>
            <person name="de Jong W.W."/>
            <person name="Kleinschmidt T."/>
            <person name="Braunitzer G."/>
        </authorList>
    </citation>
    <scope>PROTEIN SEQUENCE OF 1-45 AND 111-245</scope>
</reference>
<reference key="4">
    <citation type="journal article" date="1984" name="J. Mol. Biol.">
        <title>Bovine beta-crystallin complementary DNA clones. Alternating proline/alanine sequence of beta B1 subunit originates from a repetitive DNA sequence.</title>
        <authorList>
            <person name="Quax-Jeuken Y."/>
            <person name="Janssen C."/>
            <person name="Quax W.J."/>
            <person name="van den Heuvel R."/>
            <person name="Bloemendal H."/>
        </authorList>
    </citation>
    <scope>NUCLEOTIDE SEQUENCE [MRNA] OF 1-131</scope>
</reference>
<protein>
    <recommendedName>
        <fullName evidence="2">Beta-crystallin A3</fullName>
    </recommendedName>
    <component>
        <recommendedName>
            <fullName>Beta-crystallin A3, isoform A1, Delta4 form</fullName>
        </recommendedName>
    </component>
    <component>
        <recommendedName>
            <fullName>Beta-crystallin A3, isoform A1, Delta7 form</fullName>
        </recommendedName>
    </component>
    <component>
        <recommendedName>
            <fullName>Beta-crystallin A3, isoform A1, Delta8 form</fullName>
        </recommendedName>
    </component>
</protein>